<organism>
    <name type="scientific">Drosophila hydei</name>
    <name type="common">Fruit fly</name>
    <dbReference type="NCBI Taxonomy" id="7224"/>
    <lineage>
        <taxon>Eukaryota</taxon>
        <taxon>Metazoa</taxon>
        <taxon>Ecdysozoa</taxon>
        <taxon>Arthropoda</taxon>
        <taxon>Hexapoda</taxon>
        <taxon>Insecta</taxon>
        <taxon>Pterygota</taxon>
        <taxon>Neoptera</taxon>
        <taxon>Endopterygota</taxon>
        <taxon>Diptera</taxon>
        <taxon>Brachycera</taxon>
        <taxon>Muscomorpha</taxon>
        <taxon>Ephydroidea</taxon>
        <taxon>Drosophilidae</taxon>
        <taxon>Drosophila</taxon>
    </lineage>
</organism>
<comment type="function">
    <molecule>Protein hedgehog</molecule>
    <text evidence="2 4">The C-terminal part of the hedgehog protein precursor displays an autoproteolysis activity that results in the cleavage of the full-length protein into two parts (N-product and C-product) (By similarity). In addition, the C-terminal part displays a cholesterol transferase activity that results by the covalent attachment of a cholesterol moiety to the C-terminal of the newly generated N-product (By similarity). Once cleaved, the C-product has no signaling activity and diffuses from the cell (By similarity).</text>
</comment>
<comment type="function">
    <molecule>Protein hedgehog N-product</molecule>
    <text evidence="2">The dually lipidated hedgehog protein N-product is a morphogen which is essential for a variety of patterning events during development. Establishes the anterior-posterior axis of the embryonic segments and patterns the larval imaginal disks. Binds to the patched (ptc) receptor, which functions in association with smoothened (smo), to activate the transcription of target genes wingless (wg), decapentaplegic (dpp) and ptc. In the absence of hh, ptc represses the constitutive signaling activity of smo through fused (fu). Essential component of a signaling pathway which regulates the Duox-dependent gut immune response to bacterial uracil; required to activate Cad99C-dependent endosome formation, norpA-dependent Ca2+ mobilization and p38 MAPK, which are essential steps in the Duox-dependent production of reactive oxygen species (ROS) in response to intestinal bacterial infection. During photoreceptor differentiation, it up-regulates transcription of Ubr3, which in turn promotes the hh-signaling pathway by mediating the ubiquitination and degradation of cos.</text>
</comment>
<comment type="catalytic activity">
    <molecule>Protein hedgehog</molecule>
    <reaction evidence="4">
        <text>glycyl-L-cysteinyl-[protein] + cholesterol + H(+) = [protein]-C-terminal glycyl cholesterol ester + N-terminal L-cysteinyl-[protein]</text>
        <dbReference type="Rhea" id="RHEA:59504"/>
        <dbReference type="Rhea" id="RHEA-COMP:12707"/>
        <dbReference type="Rhea" id="RHEA-COMP:15369"/>
        <dbReference type="Rhea" id="RHEA-COMP:15374"/>
        <dbReference type="ChEBI" id="CHEBI:15378"/>
        <dbReference type="ChEBI" id="CHEBI:16113"/>
        <dbReference type="ChEBI" id="CHEBI:65250"/>
        <dbReference type="ChEBI" id="CHEBI:143135"/>
        <dbReference type="ChEBI" id="CHEBI:143140"/>
    </reaction>
    <physiologicalReaction direction="left-to-right" evidence="4">
        <dbReference type="Rhea" id="RHEA:59505"/>
    </physiologicalReaction>
</comment>
<comment type="subunit">
    <text evidence="2">Interacts with shf.</text>
</comment>
<comment type="subcellular location">
    <subcellularLocation>
        <location evidence="2">Nucleus</location>
    </subcellularLocation>
    <subcellularLocation>
        <location evidence="2">Cytoplasm</location>
    </subcellularLocation>
    <text evidence="2">Nuclear up to embryonic stage 10 and then at stage 11 shifts to the cytoplasm. Also secreted in either cleaved or uncleaved form to mediate signaling to other cells.</text>
</comment>
<comment type="subcellular location">
    <molecule>Protein hedgehog N-product</molecule>
    <subcellularLocation>
        <location evidence="2">Cell membrane</location>
        <topology evidence="2">Lipid-anchor</topology>
    </subcellularLocation>
    <text evidence="2">The N-terminal peptide remains associated with the cell surface. Heparan sulfate proteoglycans of the extracellular matrix play an essential role in diffusion. Lipophorin is required for diffusion, probably by acting as vehicle for its movement, explaining how it can spread over long distances despite its lipidation.</text>
</comment>
<comment type="PTM">
    <molecule>Protein hedgehog</molecule>
    <text evidence="2 3 4">The C-terminal part of the hedgehog protein precursor displays an autoproteolysis activity that results in the cleavage of the full-length protein into two parts (N-product and C-product) (By similarity). In addition, the C-terminal part displays a cholesterol transferase activity that results by the covalent attachment of a cholesterol moiety to the C-terminal of the newly generated N-product (By similarity). The N-product is the active species in both local and long-range signaling, whereas the C-product has no signaling activity (By similarity).</text>
</comment>
<comment type="PTM">
    <molecule>Protein hedgehog N-product</molecule>
    <text evidence="4">Cholesterylation is required for N-product targeting to lipid rafts and multimerization.</text>
</comment>
<comment type="PTM">
    <molecule>Protein hedgehog N-product</molecule>
    <text evidence="2">N-palmitoylation by Rasp of the hedgehog N-product, within the secretory pathway, is required for the embryonic and larval patterning activities of the hedgehog signal.</text>
</comment>
<comment type="similarity">
    <text evidence="7">Belongs to the hedgehog family.</text>
</comment>
<accession>P56674</accession>
<name>HH_DROHY</name>
<protein>
    <recommendedName>
        <fullName evidence="2">Protein hedgehog</fullName>
        <ecNumber evidence="4">3.1.-.-</ecNumber>
    </recommendedName>
    <component>
        <recommendedName>
            <fullName>Protein hedgehog N-product</fullName>
        </recommendedName>
    </component>
</protein>
<reference key="1">
    <citation type="journal article" date="1994" name="Development">
        <title>Products, genetic linkage and limb patterning activity of a murine hedgehog gene.</title>
        <authorList>
            <person name="Chang D.T."/>
            <person name="Lopez A."/>
            <person name="von Kessler D.P."/>
            <person name="Chiang C."/>
            <person name="Simandl B.K."/>
            <person name="Zhao R."/>
            <person name="Seldin M.F."/>
            <person name="Fallon J.F."/>
            <person name="Beachy P.A."/>
        </authorList>
    </citation>
    <scope>NUCLEOTIDE SEQUENCE [GENOMIC DNA]</scope>
</reference>
<proteinExistence type="inferred from homology"/>
<sequence length="481" mass="53706">MDNQAVSALWSCASATCLSLDAKRHSIEPNPDGQASPDVNNNNNNHNKSTTTVDAHSRKLRHIAHTPRGSCFMALLLLLLLALNFRHAHSCGPGRGLGRRRERNLFPLVLKQTVPNLSEYHNSASGPLEGAIQRDSPKFKNLVLNYNRDIEFRDEEGTGADRVMSKRCREKLNMLAYSVMNEWPGVRLRVTESWDEDRQHGQESLHYEGRAVTIATSDHDQSKYGMLARLAVEAGFDWVSYVSRRHIYCSVKSDSSPSISHMHGCFTPESTALLESGAEKALGELAIGDRVLSMDVKGQPVYSEVILFMDRNLEQVENFVQLHTDGGAVLTVTPAHLISVWQPERQTLNFIFADRVEELDYVLVRDATGELQPQRVLRLGSVQSRGVVAPLTREGTIVVNSVAASCYAVISSQSLAHWGLAPMRLLSTLQSWMPAKGQLRTAQDKSTPKDATAQQQNGLHWYANALYKVKDYVLPKSWRHD</sequence>
<keyword id="KW-0068">Autocatalytic cleavage</keyword>
<keyword id="KW-0106">Calcium</keyword>
<keyword id="KW-1003">Cell membrane</keyword>
<keyword id="KW-0963">Cytoplasm</keyword>
<keyword id="KW-0217">Developmental protein</keyword>
<keyword id="KW-0378">Hydrolase</keyword>
<keyword id="KW-0449">Lipoprotein</keyword>
<keyword id="KW-0472">Membrane</keyword>
<keyword id="KW-0479">Metal-binding</keyword>
<keyword id="KW-0504">Morphogen</keyword>
<keyword id="KW-0539">Nucleus</keyword>
<keyword id="KW-0564">Palmitate</keyword>
<keyword id="KW-0645">Protease</keyword>
<keyword id="KW-0709">Segmentation polarity protein</keyword>
<keyword id="KW-0732">Signal</keyword>
<keyword id="KW-0808">Transferase</keyword>
<gene>
    <name evidence="2" type="primary">hh</name>
</gene>
<feature type="signal peptide" evidence="5">
    <location>
        <begin position="1"/>
        <end position="19"/>
    </location>
</feature>
<feature type="propeptide" id="PRO_0000383049" evidence="5">
    <location>
        <begin position="20"/>
        <end position="90"/>
    </location>
</feature>
<feature type="chain" id="PRO_0000013205" description="Protein hedgehog">
    <location>
        <begin position="91"/>
        <end position="481"/>
    </location>
</feature>
<feature type="chain" id="PRO_0000013206" description="Protein hedgehog N-product">
    <location>
        <begin position="91"/>
        <end position="264"/>
    </location>
</feature>
<feature type="region of interest" description="Disordered" evidence="6">
    <location>
        <begin position="26"/>
        <end position="56"/>
    </location>
</feature>
<feature type="binding site" evidence="3">
    <location>
        <position position="155"/>
    </location>
    <ligand>
        <name>Ca(2+)</name>
        <dbReference type="ChEBI" id="CHEBI:29108"/>
        <label>1</label>
    </ligand>
</feature>
<feature type="binding site" evidence="3">
    <location>
        <position position="156"/>
    </location>
    <ligand>
        <name>Ca(2+)</name>
        <dbReference type="ChEBI" id="CHEBI:29108"/>
        <label>1</label>
    </ligand>
</feature>
<feature type="binding site" evidence="3">
    <location>
        <position position="156"/>
    </location>
    <ligand>
        <name>Ca(2+)</name>
        <dbReference type="ChEBI" id="CHEBI:29108"/>
        <label>2</label>
    </ligand>
</feature>
<feature type="binding site" evidence="3">
    <location>
        <position position="161"/>
    </location>
    <ligand>
        <name>Ca(2+)</name>
        <dbReference type="ChEBI" id="CHEBI:29108"/>
        <label>1</label>
    </ligand>
</feature>
<feature type="binding site" evidence="3">
    <location>
        <position position="191"/>
    </location>
    <ligand>
        <name>Ca(2+)</name>
        <dbReference type="ChEBI" id="CHEBI:29108"/>
        <label>1</label>
    </ligand>
</feature>
<feature type="binding site" evidence="3">
    <location>
        <position position="192"/>
    </location>
    <ligand>
        <name>Ca(2+)</name>
        <dbReference type="ChEBI" id="CHEBI:29108"/>
        <label>1</label>
    </ligand>
</feature>
<feature type="binding site" evidence="3">
    <location>
        <position position="192"/>
    </location>
    <ligand>
        <name>Ca(2+)</name>
        <dbReference type="ChEBI" id="CHEBI:29108"/>
        <label>2</label>
    </ligand>
</feature>
<feature type="binding site" evidence="3">
    <location>
        <position position="195"/>
    </location>
    <ligand>
        <name>Ca(2+)</name>
        <dbReference type="ChEBI" id="CHEBI:29108"/>
        <label>2</label>
    </ligand>
</feature>
<feature type="binding site" evidence="3">
    <location>
        <position position="197"/>
    </location>
    <ligand>
        <name>Ca(2+)</name>
        <dbReference type="ChEBI" id="CHEBI:29108"/>
        <label>2</label>
    </ligand>
</feature>
<feature type="site" description="Cleavage; by autolysis" evidence="1">
    <location>
        <begin position="264"/>
        <end position="265"/>
    </location>
</feature>
<feature type="site" description="Involved in cholesterol transfer" evidence="1">
    <location>
        <position position="310"/>
    </location>
</feature>
<feature type="site" description="Involved in auto-cleavage" evidence="1">
    <location>
        <position position="333"/>
    </location>
</feature>
<feature type="site" description="Essential for auto-cleavage" evidence="1">
    <location>
        <position position="336"/>
    </location>
</feature>
<feature type="lipid moiety-binding region" description="N-palmitoyl cysteine" evidence="1">
    <location>
        <position position="91"/>
    </location>
</feature>
<feature type="lipid moiety-binding region" description="Cholesterol glycine ester" evidence="1">
    <location>
        <position position="264"/>
    </location>
</feature>
<dbReference type="EC" id="3.1.-.-" evidence="4"/>
<dbReference type="SMR" id="P56674"/>
<dbReference type="MEROPS" id="C46.001"/>
<dbReference type="OrthoDB" id="5212at2759"/>
<dbReference type="Proteomes" id="UP000504633">
    <property type="component" value="Unplaced"/>
</dbReference>
<dbReference type="GO" id="GO:0005737">
    <property type="term" value="C:cytoplasm"/>
    <property type="evidence" value="ECO:0007669"/>
    <property type="project" value="UniProtKB-SubCell"/>
</dbReference>
<dbReference type="GO" id="GO:0005615">
    <property type="term" value="C:extracellular space"/>
    <property type="evidence" value="ECO:0007669"/>
    <property type="project" value="TreeGrafter"/>
</dbReference>
<dbReference type="GO" id="GO:0005634">
    <property type="term" value="C:nucleus"/>
    <property type="evidence" value="ECO:0007669"/>
    <property type="project" value="UniProtKB-SubCell"/>
</dbReference>
<dbReference type="GO" id="GO:0005886">
    <property type="term" value="C:plasma membrane"/>
    <property type="evidence" value="ECO:0007669"/>
    <property type="project" value="UniProtKB-SubCell"/>
</dbReference>
<dbReference type="GO" id="GO:0005509">
    <property type="term" value="F:calcium ion binding"/>
    <property type="evidence" value="ECO:0007669"/>
    <property type="project" value="TreeGrafter"/>
</dbReference>
<dbReference type="GO" id="GO:0140853">
    <property type="term" value="F:cholesterol-protein transferase activity"/>
    <property type="evidence" value="ECO:0000250"/>
    <property type="project" value="UniProtKB"/>
</dbReference>
<dbReference type="GO" id="GO:0016015">
    <property type="term" value="F:morphogen activity"/>
    <property type="evidence" value="ECO:0007669"/>
    <property type="project" value="UniProtKB-KW"/>
</dbReference>
<dbReference type="GO" id="GO:0005113">
    <property type="term" value="F:patched binding"/>
    <property type="evidence" value="ECO:0007669"/>
    <property type="project" value="TreeGrafter"/>
</dbReference>
<dbReference type="GO" id="GO:0008233">
    <property type="term" value="F:peptidase activity"/>
    <property type="evidence" value="ECO:0000250"/>
    <property type="project" value="UniProtKB"/>
</dbReference>
<dbReference type="GO" id="GO:0009653">
    <property type="term" value="P:anatomical structure morphogenesis"/>
    <property type="evidence" value="ECO:0007669"/>
    <property type="project" value="UniProtKB-KW"/>
</dbReference>
<dbReference type="GO" id="GO:0001708">
    <property type="term" value="P:cell fate specification"/>
    <property type="evidence" value="ECO:0007669"/>
    <property type="project" value="TreeGrafter"/>
</dbReference>
<dbReference type="GO" id="GO:0007267">
    <property type="term" value="P:cell-cell signaling"/>
    <property type="evidence" value="ECO:0007669"/>
    <property type="project" value="InterPro"/>
</dbReference>
<dbReference type="GO" id="GO:0016539">
    <property type="term" value="P:intein-mediated protein splicing"/>
    <property type="evidence" value="ECO:0007669"/>
    <property type="project" value="InterPro"/>
</dbReference>
<dbReference type="GO" id="GO:0016540">
    <property type="term" value="P:protein autoprocessing"/>
    <property type="evidence" value="ECO:0007669"/>
    <property type="project" value="InterPro"/>
</dbReference>
<dbReference type="GO" id="GO:0010468">
    <property type="term" value="P:regulation of gene expression"/>
    <property type="evidence" value="ECO:0007669"/>
    <property type="project" value="TreeGrafter"/>
</dbReference>
<dbReference type="GO" id="GO:0007367">
    <property type="term" value="P:segment polarity determination"/>
    <property type="evidence" value="ECO:0007669"/>
    <property type="project" value="UniProtKB-KW"/>
</dbReference>
<dbReference type="GO" id="GO:0097264">
    <property type="term" value="P:self proteolysis"/>
    <property type="evidence" value="ECO:0000250"/>
    <property type="project" value="UniProtKB"/>
</dbReference>
<dbReference type="GO" id="GO:0007224">
    <property type="term" value="P:smoothened signaling pathway"/>
    <property type="evidence" value="ECO:0007669"/>
    <property type="project" value="TreeGrafter"/>
</dbReference>
<dbReference type="GO" id="GO:0048731">
    <property type="term" value="P:system development"/>
    <property type="evidence" value="ECO:0007669"/>
    <property type="project" value="UniProtKB-ARBA"/>
</dbReference>
<dbReference type="CDD" id="cd00081">
    <property type="entry name" value="Hint"/>
    <property type="match status" value="1"/>
</dbReference>
<dbReference type="FunFam" id="2.170.16.10:FF:000001">
    <property type="entry name" value="Indian hedgehog"/>
    <property type="match status" value="1"/>
</dbReference>
<dbReference type="FunFam" id="3.30.1380.10:FF:000001">
    <property type="entry name" value="Indian hedgehog"/>
    <property type="match status" value="1"/>
</dbReference>
<dbReference type="Gene3D" id="3.30.1380.10">
    <property type="match status" value="1"/>
</dbReference>
<dbReference type="Gene3D" id="2.170.16.10">
    <property type="entry name" value="Hedgehog/Intein (Hint) domain"/>
    <property type="match status" value="1"/>
</dbReference>
<dbReference type="InterPro" id="IPR001657">
    <property type="entry name" value="Hedgehog"/>
</dbReference>
<dbReference type="InterPro" id="IPR001767">
    <property type="entry name" value="Hedgehog_Hint"/>
</dbReference>
<dbReference type="InterPro" id="IPR009045">
    <property type="entry name" value="Hedgehog_sig/DD-Pept_Zn-bd_sf"/>
</dbReference>
<dbReference type="InterPro" id="IPR050387">
    <property type="entry name" value="Hedgehog_Signaling"/>
</dbReference>
<dbReference type="InterPro" id="IPR000320">
    <property type="entry name" value="Hedgehog_signalling_dom"/>
</dbReference>
<dbReference type="InterPro" id="IPR003586">
    <property type="entry name" value="Hint_dom_C"/>
</dbReference>
<dbReference type="InterPro" id="IPR003587">
    <property type="entry name" value="Hint_dom_N"/>
</dbReference>
<dbReference type="InterPro" id="IPR036844">
    <property type="entry name" value="Hint_dom_sf"/>
</dbReference>
<dbReference type="InterPro" id="IPR006141">
    <property type="entry name" value="Intein_N"/>
</dbReference>
<dbReference type="PANTHER" id="PTHR11889">
    <property type="entry name" value="HEDGEHOG"/>
    <property type="match status" value="1"/>
</dbReference>
<dbReference type="PANTHER" id="PTHR11889:SF31">
    <property type="entry name" value="PROTEIN HEDGEHOG"/>
    <property type="match status" value="1"/>
</dbReference>
<dbReference type="Pfam" id="PF01085">
    <property type="entry name" value="HH_signal"/>
    <property type="match status" value="1"/>
</dbReference>
<dbReference type="Pfam" id="PF01079">
    <property type="entry name" value="Hint"/>
    <property type="match status" value="1"/>
</dbReference>
<dbReference type="PIRSF" id="PIRSF009400">
    <property type="entry name" value="Peptidase_C46"/>
    <property type="match status" value="1"/>
</dbReference>
<dbReference type="PRINTS" id="PR00632">
    <property type="entry name" value="SONICHHOG"/>
</dbReference>
<dbReference type="SMART" id="SM00305">
    <property type="entry name" value="HintC"/>
    <property type="match status" value="1"/>
</dbReference>
<dbReference type="SMART" id="SM00306">
    <property type="entry name" value="HintN"/>
    <property type="match status" value="1"/>
</dbReference>
<dbReference type="SUPFAM" id="SSF55166">
    <property type="entry name" value="Hedgehog/DD-peptidase"/>
    <property type="match status" value="1"/>
</dbReference>
<dbReference type="SUPFAM" id="SSF51294">
    <property type="entry name" value="Hedgehog/intein (Hint) domain"/>
    <property type="match status" value="1"/>
</dbReference>
<dbReference type="PROSITE" id="PS50817">
    <property type="entry name" value="INTEIN_N_TER"/>
    <property type="match status" value="1"/>
</dbReference>
<evidence type="ECO:0000250" key="1"/>
<evidence type="ECO:0000250" key="2">
    <source>
        <dbReference type="UniProtKB" id="Q02936"/>
    </source>
</evidence>
<evidence type="ECO:0000250" key="3">
    <source>
        <dbReference type="UniProtKB" id="Q15465"/>
    </source>
</evidence>
<evidence type="ECO:0000250" key="4">
    <source>
        <dbReference type="UniProtKB" id="Q62226"/>
    </source>
</evidence>
<evidence type="ECO:0000255" key="5"/>
<evidence type="ECO:0000256" key="6">
    <source>
        <dbReference type="SAM" id="MobiDB-lite"/>
    </source>
</evidence>
<evidence type="ECO:0000305" key="7"/>